<feature type="chain" id="PRO_0000164045" description="Fosfomycin resistance protein FosX">
    <location>
        <begin position="1"/>
        <end position="133"/>
    </location>
</feature>
<feature type="domain" description="VOC" evidence="2">
    <location>
        <begin position="4"/>
        <end position="122"/>
    </location>
</feature>
<feature type="active site" description="Proton acceptor" evidence="1">
    <location>
        <position position="44"/>
    </location>
</feature>
<feature type="binding site" evidence="1">
    <location>
        <position position="7"/>
    </location>
    <ligand>
        <name>Mn(2+)</name>
        <dbReference type="ChEBI" id="CHEBI:29035"/>
    </ligand>
</feature>
<feature type="binding site" evidence="1">
    <location>
        <position position="69"/>
    </location>
    <ligand>
        <name>Mn(2+)</name>
        <dbReference type="ChEBI" id="CHEBI:29035"/>
    </ligand>
</feature>
<feature type="binding site" evidence="1">
    <location>
        <position position="118"/>
    </location>
    <ligand>
        <name>Mn(2+)</name>
        <dbReference type="ChEBI" id="CHEBI:29035"/>
    </ligand>
</feature>
<protein>
    <recommendedName>
        <fullName>Fosfomycin resistance protein FosX</fullName>
    </recommendedName>
</protein>
<sequence length="133" mass="15668">MISGLSHITLIVKDLNKTTTFLEEIFDAEEIYSSGDDTFSLSKEKFFLIAGLWICIMEGESLQERTYNHIAFQIQAEEMDEYIERIKSLGMEIKPERSRVKGEGRSVYFYDYDNHLFELHAGTLEERLKRYHK</sequence>
<comment type="function">
    <text evidence="1">Catalyzes the hydration of fosfomycin.</text>
</comment>
<comment type="cofactor">
    <cofactor evidence="1">
        <name>Mn(2+)</name>
        <dbReference type="ChEBI" id="CHEBI:29035"/>
    </cofactor>
</comment>
<comment type="subunit">
    <text evidence="1">Homodimer.</text>
</comment>
<comment type="subcellular location">
    <subcellularLocation>
        <location evidence="1">Cytoplasm</location>
    </subcellularLocation>
</comment>
<comment type="similarity">
    <text evidence="3">Belongs to the fosfomycin resistance protein family.</text>
</comment>
<name>FOSX_LISIN</name>
<accession>Q92AV8</accession>
<reference key="1">
    <citation type="journal article" date="2001" name="Science">
        <title>Comparative genomics of Listeria species.</title>
        <authorList>
            <person name="Glaser P."/>
            <person name="Frangeul L."/>
            <person name="Buchrieser C."/>
            <person name="Rusniok C."/>
            <person name="Amend A."/>
            <person name="Baquero F."/>
            <person name="Berche P."/>
            <person name="Bloecker H."/>
            <person name="Brandt P."/>
            <person name="Chakraborty T."/>
            <person name="Charbit A."/>
            <person name="Chetouani F."/>
            <person name="Couve E."/>
            <person name="de Daruvar A."/>
            <person name="Dehoux P."/>
            <person name="Domann E."/>
            <person name="Dominguez-Bernal G."/>
            <person name="Duchaud E."/>
            <person name="Durant L."/>
            <person name="Dussurget O."/>
            <person name="Entian K.-D."/>
            <person name="Fsihi H."/>
            <person name="Garcia-del Portillo F."/>
            <person name="Garrido P."/>
            <person name="Gautier L."/>
            <person name="Goebel W."/>
            <person name="Gomez-Lopez N."/>
            <person name="Hain T."/>
            <person name="Hauf J."/>
            <person name="Jackson D."/>
            <person name="Jones L.-M."/>
            <person name="Kaerst U."/>
            <person name="Kreft J."/>
            <person name="Kuhn M."/>
            <person name="Kunst F."/>
            <person name="Kurapkat G."/>
            <person name="Madueno E."/>
            <person name="Maitournam A."/>
            <person name="Mata Vicente J."/>
            <person name="Ng E."/>
            <person name="Nedjari H."/>
            <person name="Nordsiek G."/>
            <person name="Novella S."/>
            <person name="de Pablos B."/>
            <person name="Perez-Diaz J.-C."/>
            <person name="Purcell R."/>
            <person name="Remmel B."/>
            <person name="Rose M."/>
            <person name="Schlueter T."/>
            <person name="Simoes N."/>
            <person name="Tierrez A."/>
            <person name="Vazquez-Boland J.-A."/>
            <person name="Voss H."/>
            <person name="Wehland J."/>
            <person name="Cossart P."/>
        </authorList>
    </citation>
    <scope>NUCLEOTIDE SEQUENCE [LARGE SCALE GENOMIC DNA]</scope>
    <source>
        <strain>ATCC BAA-680 / CLIP 11262</strain>
    </source>
</reference>
<gene>
    <name type="primary">fosX</name>
    <name type="ordered locus">lin1810</name>
</gene>
<organism>
    <name type="scientific">Listeria innocua serovar 6a (strain ATCC BAA-680 / CLIP 11262)</name>
    <dbReference type="NCBI Taxonomy" id="272626"/>
    <lineage>
        <taxon>Bacteria</taxon>
        <taxon>Bacillati</taxon>
        <taxon>Bacillota</taxon>
        <taxon>Bacilli</taxon>
        <taxon>Bacillales</taxon>
        <taxon>Listeriaceae</taxon>
        <taxon>Listeria</taxon>
    </lineage>
</organism>
<dbReference type="EMBL" id="AL596170">
    <property type="protein sequence ID" value="CAC97041.1"/>
    <property type="molecule type" value="Genomic_DNA"/>
</dbReference>
<dbReference type="PIR" id="AI1658">
    <property type="entry name" value="AI1658"/>
</dbReference>
<dbReference type="RefSeq" id="WP_003762632.1">
    <property type="nucleotide sequence ID" value="NC_003212.1"/>
</dbReference>
<dbReference type="SMR" id="Q92AV8"/>
<dbReference type="STRING" id="272626.gene:17566165"/>
<dbReference type="GeneID" id="93235147"/>
<dbReference type="KEGG" id="lin:lin1810"/>
<dbReference type="eggNOG" id="COG0346">
    <property type="taxonomic scope" value="Bacteria"/>
</dbReference>
<dbReference type="HOGENOM" id="CLU_121356_1_0_9"/>
<dbReference type="OrthoDB" id="192739at2"/>
<dbReference type="Proteomes" id="UP000002513">
    <property type="component" value="Chromosome"/>
</dbReference>
<dbReference type="GO" id="GO:0005737">
    <property type="term" value="C:cytoplasm"/>
    <property type="evidence" value="ECO:0007669"/>
    <property type="project" value="UniProtKB-SubCell"/>
</dbReference>
<dbReference type="GO" id="GO:0046872">
    <property type="term" value="F:metal ion binding"/>
    <property type="evidence" value="ECO:0007669"/>
    <property type="project" value="UniProtKB-KW"/>
</dbReference>
<dbReference type="GO" id="GO:0046677">
    <property type="term" value="P:response to antibiotic"/>
    <property type="evidence" value="ECO:0007669"/>
    <property type="project" value="UniProtKB-KW"/>
</dbReference>
<dbReference type="CDD" id="cd08364">
    <property type="entry name" value="FosX"/>
    <property type="match status" value="1"/>
</dbReference>
<dbReference type="Gene3D" id="3.10.180.10">
    <property type="entry name" value="2,3-Dihydroxybiphenyl 1,2-Dioxygenase, domain 1"/>
    <property type="match status" value="1"/>
</dbReference>
<dbReference type="InterPro" id="IPR051332">
    <property type="entry name" value="Fosfomycin_Res_Enzymes"/>
</dbReference>
<dbReference type="InterPro" id="IPR037434">
    <property type="entry name" value="FosX"/>
</dbReference>
<dbReference type="InterPro" id="IPR029068">
    <property type="entry name" value="Glyas_Bleomycin-R_OHBP_Dase"/>
</dbReference>
<dbReference type="InterPro" id="IPR004360">
    <property type="entry name" value="Glyas_Fos-R_dOase_dom"/>
</dbReference>
<dbReference type="InterPro" id="IPR037523">
    <property type="entry name" value="VOC"/>
</dbReference>
<dbReference type="NCBIfam" id="NF000222">
    <property type="entry name" value="FosX"/>
    <property type="match status" value="1"/>
</dbReference>
<dbReference type="PANTHER" id="PTHR36113:SF6">
    <property type="entry name" value="FOSFOMYCIN RESISTANCE PROTEIN FOSX"/>
    <property type="match status" value="1"/>
</dbReference>
<dbReference type="PANTHER" id="PTHR36113">
    <property type="entry name" value="LYASE, PUTATIVE-RELATED-RELATED"/>
    <property type="match status" value="1"/>
</dbReference>
<dbReference type="Pfam" id="PF00903">
    <property type="entry name" value="Glyoxalase"/>
    <property type="match status" value="1"/>
</dbReference>
<dbReference type="SUPFAM" id="SSF54593">
    <property type="entry name" value="Glyoxalase/Bleomycin resistance protein/Dihydroxybiphenyl dioxygenase"/>
    <property type="match status" value="1"/>
</dbReference>
<dbReference type="PROSITE" id="PS51819">
    <property type="entry name" value="VOC"/>
    <property type="match status" value="1"/>
</dbReference>
<evidence type="ECO:0000250" key="1"/>
<evidence type="ECO:0000255" key="2">
    <source>
        <dbReference type="PROSITE-ProRule" id="PRU01163"/>
    </source>
</evidence>
<evidence type="ECO:0000305" key="3"/>
<proteinExistence type="inferred from homology"/>
<keyword id="KW-0046">Antibiotic resistance</keyword>
<keyword id="KW-0963">Cytoplasm</keyword>
<keyword id="KW-0464">Manganese</keyword>
<keyword id="KW-0479">Metal-binding</keyword>